<proteinExistence type="inferred from homology"/>
<evidence type="ECO:0000255" key="1">
    <source>
        <dbReference type="HAMAP-Rule" id="MF_00815"/>
    </source>
</evidence>
<feature type="chain" id="PRO_1000134208" description="ATP synthase gamma chain">
    <location>
        <begin position="1"/>
        <end position="287"/>
    </location>
</feature>
<comment type="function">
    <text evidence="1">Produces ATP from ADP in the presence of a proton gradient across the membrane. The gamma chain is believed to be important in regulating ATPase activity and the flow of protons through the CF(0) complex.</text>
</comment>
<comment type="subunit">
    <text evidence="1">F-type ATPases have 2 components, CF(1) - the catalytic core - and CF(0) - the membrane proton channel. CF(1) has five subunits: alpha(3), beta(3), gamma(1), delta(1), epsilon(1). CF(0) has three main subunits: a, b and c.</text>
</comment>
<comment type="subcellular location">
    <subcellularLocation>
        <location evidence="1">Cell inner membrane</location>
        <topology evidence="1">Peripheral membrane protein</topology>
    </subcellularLocation>
</comment>
<comment type="similarity">
    <text evidence="1">Belongs to the ATPase gamma chain family.</text>
</comment>
<sequence length="287" mass="31577">MAGAKEIRSKIASVQNTQKITKAMEMVAASKMRKSQDRMAASRPYAETMRKVIGHLAHGNLEYKHPYLEDRDVKRVGYLVVSTDRGLCGGLNINLFKKLLAEMKTWTDKGVQCDLAMIGSKGVSFFNSVGGNVVAQVTGMGDNPSLSELIGPVKVMLQAYDEGRLDKLYIVSNKFINTMSQVPTISQLLPLPASDDDDLKHKSWDYLYEPDPKALLDTLLRRYVESQVYQGVVENLASEQAARMVAMKAATDNGGSLIKELQLVYNKARQASITQELTEIVSGAAAV</sequence>
<gene>
    <name evidence="1" type="primary">atpG</name>
    <name type="ordered locus">SbBS512_E4188</name>
</gene>
<name>ATPG_SHIB3</name>
<accession>B2TUP2</accession>
<reference key="1">
    <citation type="submission" date="2008-05" db="EMBL/GenBank/DDBJ databases">
        <title>Complete sequence of Shigella boydii serotype 18 strain BS512.</title>
        <authorList>
            <person name="Rasko D.A."/>
            <person name="Rosovitz M."/>
            <person name="Maurelli A.T."/>
            <person name="Myers G."/>
            <person name="Seshadri R."/>
            <person name="Cer R."/>
            <person name="Jiang L."/>
            <person name="Ravel J."/>
            <person name="Sebastian Y."/>
        </authorList>
    </citation>
    <scope>NUCLEOTIDE SEQUENCE [LARGE SCALE GENOMIC DNA]</scope>
    <source>
        <strain>CDC 3083-94 / BS512</strain>
    </source>
</reference>
<dbReference type="EMBL" id="CP001063">
    <property type="protein sequence ID" value="ACD07531.1"/>
    <property type="molecule type" value="Genomic_DNA"/>
</dbReference>
<dbReference type="RefSeq" id="WP_000896498.1">
    <property type="nucleotide sequence ID" value="NC_010658.1"/>
</dbReference>
<dbReference type="SMR" id="B2TUP2"/>
<dbReference type="STRING" id="344609.SbBS512_E4188"/>
<dbReference type="GeneID" id="93778234"/>
<dbReference type="KEGG" id="sbc:SbBS512_E4188"/>
<dbReference type="HOGENOM" id="CLU_050669_0_1_6"/>
<dbReference type="Proteomes" id="UP000001030">
    <property type="component" value="Chromosome"/>
</dbReference>
<dbReference type="GO" id="GO:0005886">
    <property type="term" value="C:plasma membrane"/>
    <property type="evidence" value="ECO:0007669"/>
    <property type="project" value="UniProtKB-SubCell"/>
</dbReference>
<dbReference type="GO" id="GO:0045259">
    <property type="term" value="C:proton-transporting ATP synthase complex"/>
    <property type="evidence" value="ECO:0007669"/>
    <property type="project" value="UniProtKB-KW"/>
</dbReference>
<dbReference type="GO" id="GO:0005524">
    <property type="term" value="F:ATP binding"/>
    <property type="evidence" value="ECO:0007669"/>
    <property type="project" value="UniProtKB-UniRule"/>
</dbReference>
<dbReference type="GO" id="GO:0046933">
    <property type="term" value="F:proton-transporting ATP synthase activity, rotational mechanism"/>
    <property type="evidence" value="ECO:0007669"/>
    <property type="project" value="UniProtKB-UniRule"/>
</dbReference>
<dbReference type="GO" id="GO:0042777">
    <property type="term" value="P:proton motive force-driven plasma membrane ATP synthesis"/>
    <property type="evidence" value="ECO:0007669"/>
    <property type="project" value="UniProtKB-UniRule"/>
</dbReference>
<dbReference type="CDD" id="cd12151">
    <property type="entry name" value="F1-ATPase_gamma"/>
    <property type="match status" value="1"/>
</dbReference>
<dbReference type="FunFam" id="1.10.287.80:FF:000005">
    <property type="entry name" value="ATP synthase gamma chain"/>
    <property type="match status" value="2"/>
</dbReference>
<dbReference type="FunFam" id="3.40.1380.10:FF:000001">
    <property type="entry name" value="ATP synthase gamma chain"/>
    <property type="match status" value="1"/>
</dbReference>
<dbReference type="Gene3D" id="3.40.1380.10">
    <property type="match status" value="1"/>
</dbReference>
<dbReference type="Gene3D" id="1.10.287.80">
    <property type="entry name" value="ATP synthase, gamma subunit, helix hairpin domain"/>
    <property type="match status" value="1"/>
</dbReference>
<dbReference type="HAMAP" id="MF_00815">
    <property type="entry name" value="ATP_synth_gamma_bact"/>
    <property type="match status" value="1"/>
</dbReference>
<dbReference type="InterPro" id="IPR035968">
    <property type="entry name" value="ATP_synth_F1_ATPase_gsu"/>
</dbReference>
<dbReference type="InterPro" id="IPR000131">
    <property type="entry name" value="ATP_synth_F1_gsu"/>
</dbReference>
<dbReference type="InterPro" id="IPR023632">
    <property type="entry name" value="ATP_synth_F1_gsu_CS"/>
</dbReference>
<dbReference type="NCBIfam" id="TIGR01146">
    <property type="entry name" value="ATPsyn_F1gamma"/>
    <property type="match status" value="1"/>
</dbReference>
<dbReference type="NCBIfam" id="NF004144">
    <property type="entry name" value="PRK05621.1-1"/>
    <property type="match status" value="1"/>
</dbReference>
<dbReference type="PANTHER" id="PTHR11693">
    <property type="entry name" value="ATP SYNTHASE GAMMA CHAIN"/>
    <property type="match status" value="1"/>
</dbReference>
<dbReference type="PANTHER" id="PTHR11693:SF22">
    <property type="entry name" value="ATP SYNTHASE SUBUNIT GAMMA, MITOCHONDRIAL"/>
    <property type="match status" value="1"/>
</dbReference>
<dbReference type="Pfam" id="PF00231">
    <property type="entry name" value="ATP-synt"/>
    <property type="match status" value="1"/>
</dbReference>
<dbReference type="PRINTS" id="PR00126">
    <property type="entry name" value="ATPASEGAMMA"/>
</dbReference>
<dbReference type="SUPFAM" id="SSF52943">
    <property type="entry name" value="ATP synthase (F1-ATPase), gamma subunit"/>
    <property type="match status" value="1"/>
</dbReference>
<dbReference type="PROSITE" id="PS00153">
    <property type="entry name" value="ATPASE_GAMMA"/>
    <property type="match status" value="1"/>
</dbReference>
<keyword id="KW-0066">ATP synthesis</keyword>
<keyword id="KW-0997">Cell inner membrane</keyword>
<keyword id="KW-1003">Cell membrane</keyword>
<keyword id="KW-0139">CF(1)</keyword>
<keyword id="KW-0375">Hydrogen ion transport</keyword>
<keyword id="KW-0406">Ion transport</keyword>
<keyword id="KW-0472">Membrane</keyword>
<keyword id="KW-1185">Reference proteome</keyword>
<keyword id="KW-0813">Transport</keyword>
<protein>
    <recommendedName>
        <fullName evidence="1">ATP synthase gamma chain</fullName>
    </recommendedName>
    <alternativeName>
        <fullName evidence="1">ATP synthase F1 sector gamma subunit</fullName>
    </alternativeName>
    <alternativeName>
        <fullName evidence="1">F-ATPase gamma subunit</fullName>
    </alternativeName>
</protein>
<organism>
    <name type="scientific">Shigella boydii serotype 18 (strain CDC 3083-94 / BS512)</name>
    <dbReference type="NCBI Taxonomy" id="344609"/>
    <lineage>
        <taxon>Bacteria</taxon>
        <taxon>Pseudomonadati</taxon>
        <taxon>Pseudomonadota</taxon>
        <taxon>Gammaproteobacteria</taxon>
        <taxon>Enterobacterales</taxon>
        <taxon>Enterobacteriaceae</taxon>
        <taxon>Shigella</taxon>
    </lineage>
</organism>